<sequence length="904" mass="98472">MVTTASAPSEDRAKPTLMLLDGNSLAFRAFYALPAENFKTRGGLTTNAVYGFTAMLINLLRDEAPTHIAAAFDVSRQTFRLQRYPEYKANRSSTPDEFAGQIDITKEVLGALGITVLSEPGFEADDLIATLATQAENEGYRVLVVTGDRDALQLVSDDVTVLYPRKGVSELTRFTPEAVVEKYGLTPRQYPDFAALRGDPSDNLPGIPGVGEKTAAKWIAEYGSLRSLVDNVDAVRGKVGDALRANLASVVRNRELTDLVRDVPLAQTPDTLRLQPWDRDHIHRLFDDLEFRVLRDRLFDTLAAAGGPEVDEGFDVRGGALAPGTVRQWLAEHAGDGRRAGLTVVGTHLPHGGDATAMAVAAADGEGAYLDTATLTPDDDAALAAWLADPAKPKALHEAKAAVHDLAGRGWTLEGVTSDTALAAYLVRPGQRSFTLDDLSLRYLRRELRAETPQQQQLSLLDDDDTDAETIQTTILRARAVIDLADALDAELARIDSTALLGEMELPVQRVLAKMESAGIAVDLPMLTELQSQFGDQIRDAAEAAYGVIGKQINLGSPKQLQVVLFDELGMPKTKRTKTGYTTDADALQSLFDKTGHPFLQHLLAHRDVTRLKVTVDGLLQAVAADGRIHTTFNQTIAATGRLSSTEPNLQNIPIRTDAGRRIRDAFVVGDGYAELMTADYSQIEMRIMAHLSGDEGLIEAFNTGEDLHSFVASRAFGVPIDEVTGELRRRVKAMSYGLAYGLSAYGLSQQLKISTEEANEQMDAYFARFGGVRDYLRAVVERARKDGYTSTVLGRRRYLPELDSSNRQVREAAERAALNAPIQGSAADIIKVAMIQVDKALNEAQLASRMLLQVHDELLFEIAPGERERVEALVRDKMGGAYPLDVPLEVSVGYGRSWDAAAH</sequence>
<accession>P9WNU4</accession>
<accession>L0TA70</accession>
<accession>P0A550</accession>
<accession>Q07700</accession>
<comment type="function">
    <text evidence="1">In addition to polymerase activity, this DNA polymerase exhibits 3'-5' and 5'-3' exonuclease activity.</text>
</comment>
<comment type="catalytic activity">
    <reaction>
        <text>DNA(n) + a 2'-deoxyribonucleoside 5'-triphosphate = DNA(n+1) + diphosphate</text>
        <dbReference type="Rhea" id="RHEA:22508"/>
        <dbReference type="Rhea" id="RHEA-COMP:17339"/>
        <dbReference type="Rhea" id="RHEA-COMP:17340"/>
        <dbReference type="ChEBI" id="CHEBI:33019"/>
        <dbReference type="ChEBI" id="CHEBI:61560"/>
        <dbReference type="ChEBI" id="CHEBI:173112"/>
        <dbReference type="EC" id="2.7.7.7"/>
    </reaction>
</comment>
<comment type="similarity">
    <text evidence="3">Belongs to the DNA polymerase type-A family.</text>
</comment>
<name>DPO1_MYCTO</name>
<dbReference type="EC" id="2.7.7.7"/>
<dbReference type="EMBL" id="AE000516">
    <property type="protein sequence ID" value="AAK45935.1"/>
    <property type="molecule type" value="Genomic_DNA"/>
</dbReference>
<dbReference type="PIR" id="C70559">
    <property type="entry name" value="C70559"/>
</dbReference>
<dbReference type="RefSeq" id="WP_003408063.1">
    <property type="nucleotide sequence ID" value="NZ_KK341227.1"/>
</dbReference>
<dbReference type="SMR" id="P9WNU4"/>
<dbReference type="KEGG" id="mtc:MT1665"/>
<dbReference type="PATRIC" id="fig|83331.31.peg.1788"/>
<dbReference type="HOGENOM" id="CLU_004675_0_0_11"/>
<dbReference type="Proteomes" id="UP000001020">
    <property type="component" value="Chromosome"/>
</dbReference>
<dbReference type="GO" id="GO:0008408">
    <property type="term" value="F:3'-5' exonuclease activity"/>
    <property type="evidence" value="ECO:0007669"/>
    <property type="project" value="InterPro"/>
</dbReference>
<dbReference type="GO" id="GO:0008409">
    <property type="term" value="F:5'-3' exonuclease activity"/>
    <property type="evidence" value="ECO:0007669"/>
    <property type="project" value="InterPro"/>
</dbReference>
<dbReference type="GO" id="GO:0003677">
    <property type="term" value="F:DNA binding"/>
    <property type="evidence" value="ECO:0007669"/>
    <property type="project" value="UniProtKB-KW"/>
</dbReference>
<dbReference type="GO" id="GO:0003887">
    <property type="term" value="F:DNA-directed DNA polymerase activity"/>
    <property type="evidence" value="ECO:0007669"/>
    <property type="project" value="UniProtKB-KW"/>
</dbReference>
<dbReference type="GO" id="GO:0006261">
    <property type="term" value="P:DNA-templated DNA replication"/>
    <property type="evidence" value="ECO:0007669"/>
    <property type="project" value="InterPro"/>
</dbReference>
<dbReference type="GO" id="GO:0006302">
    <property type="term" value="P:double-strand break repair"/>
    <property type="evidence" value="ECO:0007669"/>
    <property type="project" value="TreeGrafter"/>
</dbReference>
<dbReference type="CDD" id="cd08637">
    <property type="entry name" value="DNA_pol_A_pol_I_C"/>
    <property type="match status" value="1"/>
</dbReference>
<dbReference type="CDD" id="cd06140">
    <property type="entry name" value="DNA_polA_I_Bacillus_like_exo"/>
    <property type="match status" value="1"/>
</dbReference>
<dbReference type="CDD" id="cd09898">
    <property type="entry name" value="H3TH_53EXO"/>
    <property type="match status" value="1"/>
</dbReference>
<dbReference type="CDD" id="cd09859">
    <property type="entry name" value="PIN_53EXO"/>
    <property type="match status" value="1"/>
</dbReference>
<dbReference type="FunFam" id="1.10.150.20:FF:000002">
    <property type="entry name" value="DNA polymerase I"/>
    <property type="match status" value="1"/>
</dbReference>
<dbReference type="FunFam" id="1.10.150.20:FF:000003">
    <property type="entry name" value="DNA polymerase I"/>
    <property type="match status" value="1"/>
</dbReference>
<dbReference type="FunFam" id="1.20.1060.10:FF:000001">
    <property type="entry name" value="DNA polymerase I"/>
    <property type="match status" value="1"/>
</dbReference>
<dbReference type="FunFam" id="3.40.50.1010:FF:000001">
    <property type="entry name" value="DNA polymerase I"/>
    <property type="match status" value="1"/>
</dbReference>
<dbReference type="Gene3D" id="3.30.70.370">
    <property type="match status" value="1"/>
</dbReference>
<dbReference type="Gene3D" id="1.10.150.20">
    <property type="entry name" value="5' to 3' exonuclease, C-terminal subdomain"/>
    <property type="match status" value="2"/>
</dbReference>
<dbReference type="Gene3D" id="3.40.50.1010">
    <property type="entry name" value="5'-nuclease"/>
    <property type="match status" value="1"/>
</dbReference>
<dbReference type="Gene3D" id="3.30.420.10">
    <property type="entry name" value="Ribonuclease H-like superfamily/Ribonuclease H"/>
    <property type="match status" value="1"/>
</dbReference>
<dbReference type="Gene3D" id="1.20.1060.10">
    <property type="entry name" value="Taq DNA Polymerase, Chain T, domain 4"/>
    <property type="match status" value="1"/>
</dbReference>
<dbReference type="InterPro" id="IPR002562">
    <property type="entry name" value="3'-5'_exonuclease_dom"/>
</dbReference>
<dbReference type="InterPro" id="IPR020046">
    <property type="entry name" value="5-3_exonucl_a-hlix_arch_N"/>
</dbReference>
<dbReference type="InterPro" id="IPR002421">
    <property type="entry name" value="5-3_exonuclease"/>
</dbReference>
<dbReference type="InterPro" id="IPR036279">
    <property type="entry name" value="5-3_exonuclease_C_sf"/>
</dbReference>
<dbReference type="InterPro" id="IPR019760">
    <property type="entry name" value="DNA-dir_DNA_pol_A_CS"/>
</dbReference>
<dbReference type="InterPro" id="IPR001098">
    <property type="entry name" value="DNA-dir_DNA_pol_A_palm_dom"/>
</dbReference>
<dbReference type="InterPro" id="IPR043502">
    <property type="entry name" value="DNA/RNA_pol_sf"/>
</dbReference>
<dbReference type="InterPro" id="IPR054690">
    <property type="entry name" value="DNA_polI_exonuclease"/>
</dbReference>
<dbReference type="InterPro" id="IPR020045">
    <property type="entry name" value="DNA_polI_H3TH"/>
</dbReference>
<dbReference type="InterPro" id="IPR018320">
    <property type="entry name" value="DNA_polymerase_1"/>
</dbReference>
<dbReference type="InterPro" id="IPR002298">
    <property type="entry name" value="DNA_polymerase_A"/>
</dbReference>
<dbReference type="InterPro" id="IPR008918">
    <property type="entry name" value="HhH2"/>
</dbReference>
<dbReference type="InterPro" id="IPR029060">
    <property type="entry name" value="PIN-like_dom_sf"/>
</dbReference>
<dbReference type="InterPro" id="IPR012337">
    <property type="entry name" value="RNaseH-like_sf"/>
</dbReference>
<dbReference type="InterPro" id="IPR036397">
    <property type="entry name" value="RNaseH_sf"/>
</dbReference>
<dbReference type="NCBIfam" id="TIGR00593">
    <property type="entry name" value="pola"/>
    <property type="match status" value="1"/>
</dbReference>
<dbReference type="NCBIfam" id="NF004397">
    <property type="entry name" value="PRK05755.1"/>
    <property type="match status" value="1"/>
</dbReference>
<dbReference type="PANTHER" id="PTHR10133">
    <property type="entry name" value="DNA POLYMERASE I"/>
    <property type="match status" value="1"/>
</dbReference>
<dbReference type="PANTHER" id="PTHR10133:SF27">
    <property type="entry name" value="DNA POLYMERASE NU"/>
    <property type="match status" value="1"/>
</dbReference>
<dbReference type="Pfam" id="PF01367">
    <property type="entry name" value="5_3_exonuc"/>
    <property type="match status" value="1"/>
</dbReference>
<dbReference type="Pfam" id="PF02739">
    <property type="entry name" value="5_3_exonuc_N"/>
    <property type="match status" value="1"/>
</dbReference>
<dbReference type="Pfam" id="PF00476">
    <property type="entry name" value="DNA_pol_A"/>
    <property type="match status" value="1"/>
</dbReference>
<dbReference type="Pfam" id="PF22619">
    <property type="entry name" value="DNA_polI_exo1"/>
    <property type="match status" value="1"/>
</dbReference>
<dbReference type="PRINTS" id="PR00868">
    <property type="entry name" value="DNAPOLI"/>
</dbReference>
<dbReference type="SMART" id="SM00474">
    <property type="entry name" value="35EXOc"/>
    <property type="match status" value="1"/>
</dbReference>
<dbReference type="SMART" id="SM00475">
    <property type="entry name" value="53EXOc"/>
    <property type="match status" value="1"/>
</dbReference>
<dbReference type="SMART" id="SM00279">
    <property type="entry name" value="HhH2"/>
    <property type="match status" value="1"/>
</dbReference>
<dbReference type="SMART" id="SM00482">
    <property type="entry name" value="POLAc"/>
    <property type="match status" value="1"/>
</dbReference>
<dbReference type="SUPFAM" id="SSF47807">
    <property type="entry name" value="5' to 3' exonuclease, C-terminal subdomain"/>
    <property type="match status" value="1"/>
</dbReference>
<dbReference type="SUPFAM" id="SSF56672">
    <property type="entry name" value="DNA/RNA polymerases"/>
    <property type="match status" value="1"/>
</dbReference>
<dbReference type="SUPFAM" id="SSF88723">
    <property type="entry name" value="PIN domain-like"/>
    <property type="match status" value="1"/>
</dbReference>
<dbReference type="SUPFAM" id="SSF53098">
    <property type="entry name" value="Ribonuclease H-like"/>
    <property type="match status" value="1"/>
</dbReference>
<dbReference type="PROSITE" id="PS00447">
    <property type="entry name" value="DNA_POLYMERASE_A"/>
    <property type="match status" value="1"/>
</dbReference>
<gene>
    <name type="primary">polA</name>
    <name type="ordered locus">MT1665</name>
</gene>
<organism>
    <name type="scientific">Mycobacterium tuberculosis (strain CDC 1551 / Oshkosh)</name>
    <dbReference type="NCBI Taxonomy" id="83331"/>
    <lineage>
        <taxon>Bacteria</taxon>
        <taxon>Bacillati</taxon>
        <taxon>Actinomycetota</taxon>
        <taxon>Actinomycetes</taxon>
        <taxon>Mycobacteriales</taxon>
        <taxon>Mycobacteriaceae</taxon>
        <taxon>Mycobacterium</taxon>
        <taxon>Mycobacterium tuberculosis complex</taxon>
    </lineage>
</organism>
<protein>
    <recommendedName>
        <fullName>DNA polymerase I</fullName>
        <shortName>POL I</shortName>
        <ecNumber>2.7.7.7</ecNumber>
    </recommendedName>
</protein>
<proteinExistence type="inferred from homology"/>
<keyword id="KW-0227">DNA damage</keyword>
<keyword id="KW-0234">DNA repair</keyword>
<keyword id="KW-0235">DNA replication</keyword>
<keyword id="KW-0238">DNA-binding</keyword>
<keyword id="KW-0239">DNA-directed DNA polymerase</keyword>
<keyword id="KW-0269">Exonuclease</keyword>
<keyword id="KW-0378">Hydrolase</keyword>
<keyword id="KW-0540">Nuclease</keyword>
<keyword id="KW-0548">Nucleotidyltransferase</keyword>
<keyword id="KW-1185">Reference proteome</keyword>
<keyword id="KW-0808">Transferase</keyword>
<evidence type="ECO:0000250" key="1"/>
<evidence type="ECO:0000255" key="2"/>
<evidence type="ECO:0000305" key="3"/>
<reference key="1">
    <citation type="journal article" date="2002" name="J. Bacteriol.">
        <title>Whole-genome comparison of Mycobacterium tuberculosis clinical and laboratory strains.</title>
        <authorList>
            <person name="Fleischmann R.D."/>
            <person name="Alland D."/>
            <person name="Eisen J.A."/>
            <person name="Carpenter L."/>
            <person name="White O."/>
            <person name="Peterson J.D."/>
            <person name="DeBoy R.T."/>
            <person name="Dodson R.J."/>
            <person name="Gwinn M.L."/>
            <person name="Haft D.H."/>
            <person name="Hickey E.K."/>
            <person name="Kolonay J.F."/>
            <person name="Nelson W.C."/>
            <person name="Umayam L.A."/>
            <person name="Ermolaeva M.D."/>
            <person name="Salzberg S.L."/>
            <person name="Delcher A."/>
            <person name="Utterback T.R."/>
            <person name="Weidman J.F."/>
            <person name="Khouri H.M."/>
            <person name="Gill J."/>
            <person name="Mikula A."/>
            <person name="Bishai W."/>
            <person name="Jacobs W.R. Jr."/>
            <person name="Venter J.C."/>
            <person name="Fraser C.M."/>
        </authorList>
    </citation>
    <scope>NUCLEOTIDE SEQUENCE [LARGE SCALE GENOMIC DNA]</scope>
    <source>
        <strain>CDC 1551 / Oshkosh</strain>
    </source>
</reference>
<feature type="chain" id="PRO_0000427066" description="DNA polymerase I">
    <location>
        <begin position="1"/>
        <end position="904"/>
    </location>
</feature>
<feature type="domain" description="5'-3' exonuclease" evidence="2">
    <location>
        <begin position="186"/>
        <end position="279"/>
    </location>
</feature>
<feature type="domain" description="3'-5' exonuclease" evidence="2">
    <location>
        <begin position="317"/>
        <end position="493"/>
    </location>
</feature>